<protein>
    <recommendedName>
        <fullName>ER-derived vesicles protein ERV15</fullName>
    </recommendedName>
</protein>
<feature type="chain" id="PRO_0000122237" description="ER-derived vesicles protein ERV15">
    <location>
        <begin position="1"/>
        <end position="142"/>
    </location>
</feature>
<feature type="topological domain" description="Cytoplasmic" evidence="1">
    <location>
        <begin position="1"/>
        <end position="7"/>
    </location>
</feature>
<feature type="transmembrane region" description="Helical" evidence="1">
    <location>
        <begin position="8"/>
        <end position="28"/>
    </location>
</feature>
<feature type="topological domain" description="Extracellular" evidence="1">
    <location>
        <begin position="29"/>
        <end position="55"/>
    </location>
</feature>
<feature type="transmembrane region" description="Helical" evidence="1">
    <location>
        <begin position="56"/>
        <end position="76"/>
    </location>
</feature>
<feature type="topological domain" description="Cytoplasmic" evidence="1">
    <location>
        <begin position="77"/>
        <end position="114"/>
    </location>
</feature>
<feature type="transmembrane region" description="Helical" evidence="1">
    <location>
        <begin position="115"/>
        <end position="135"/>
    </location>
</feature>
<feature type="topological domain" description="Extracellular" evidence="1">
    <location>
        <begin position="136"/>
        <end position="142"/>
    </location>
</feature>
<dbReference type="EMBL" id="Z36079">
    <property type="protein sequence ID" value="CAA85174.1"/>
    <property type="molecule type" value="Genomic_DNA"/>
</dbReference>
<dbReference type="EMBL" id="BK006936">
    <property type="protein sequence ID" value="DAA07326.1"/>
    <property type="molecule type" value="Genomic_DNA"/>
</dbReference>
<dbReference type="PIR" id="S46084">
    <property type="entry name" value="S46084"/>
</dbReference>
<dbReference type="RefSeq" id="NP_009769.1">
    <property type="nucleotide sequence ID" value="NM_001178558.1"/>
</dbReference>
<dbReference type="SMR" id="P38312"/>
<dbReference type="BioGRID" id="32907">
    <property type="interactions" value="99"/>
</dbReference>
<dbReference type="FunCoup" id="P38312">
    <property type="interactions" value="581"/>
</dbReference>
<dbReference type="IntAct" id="P38312">
    <property type="interactions" value="1"/>
</dbReference>
<dbReference type="MINT" id="P38312"/>
<dbReference type="STRING" id="4932.YBR210W"/>
<dbReference type="PaxDb" id="4932-YBR210W"/>
<dbReference type="PeptideAtlas" id="P38312"/>
<dbReference type="EnsemblFungi" id="YBR210W_mRNA">
    <property type="protein sequence ID" value="YBR210W"/>
    <property type="gene ID" value="YBR210W"/>
</dbReference>
<dbReference type="GeneID" id="852511"/>
<dbReference type="KEGG" id="sce:YBR210W"/>
<dbReference type="AGR" id="SGD:S000000414"/>
<dbReference type="SGD" id="S000000414">
    <property type="gene designation" value="ERV15"/>
</dbReference>
<dbReference type="VEuPathDB" id="FungiDB:YBR210W"/>
<dbReference type="eggNOG" id="KOG2729">
    <property type="taxonomic scope" value="Eukaryota"/>
</dbReference>
<dbReference type="GeneTree" id="ENSGT00950000182834"/>
<dbReference type="HOGENOM" id="CLU_112942_0_0_1"/>
<dbReference type="InParanoid" id="P38312"/>
<dbReference type="OMA" id="FAVFHVI"/>
<dbReference type="OrthoDB" id="434393at2759"/>
<dbReference type="BioCyc" id="YEAST:G3O-29147-MONOMER"/>
<dbReference type="BioGRID-ORCS" id="852511">
    <property type="hits" value="3 hits in 10 CRISPR screens"/>
</dbReference>
<dbReference type="PRO" id="PR:P38312"/>
<dbReference type="Proteomes" id="UP000002311">
    <property type="component" value="Chromosome II"/>
</dbReference>
<dbReference type="RNAct" id="P38312">
    <property type="molecule type" value="protein"/>
</dbReference>
<dbReference type="GO" id="GO:0030134">
    <property type="term" value="C:COPII-coated ER to Golgi transport vesicle"/>
    <property type="evidence" value="ECO:0000316"/>
    <property type="project" value="SGD"/>
</dbReference>
<dbReference type="GO" id="GO:0005783">
    <property type="term" value="C:endoplasmic reticulum"/>
    <property type="evidence" value="ECO:0007005"/>
    <property type="project" value="SGD"/>
</dbReference>
<dbReference type="GO" id="GO:0005789">
    <property type="term" value="C:endoplasmic reticulum membrane"/>
    <property type="evidence" value="ECO:0000318"/>
    <property type="project" value="GO_Central"/>
</dbReference>
<dbReference type="GO" id="GO:0005102">
    <property type="term" value="F:signaling receptor binding"/>
    <property type="evidence" value="ECO:0000318"/>
    <property type="project" value="GO_Central"/>
</dbReference>
<dbReference type="GO" id="GO:0006888">
    <property type="term" value="P:endoplasmic reticulum to Golgi vesicle-mediated transport"/>
    <property type="evidence" value="ECO:0000316"/>
    <property type="project" value="SGD"/>
</dbReference>
<dbReference type="InterPro" id="IPR003377">
    <property type="entry name" value="Cornichon"/>
</dbReference>
<dbReference type="InterPro" id="IPR033466">
    <property type="entry name" value="Cornichon_conserved"/>
</dbReference>
<dbReference type="PANTHER" id="PTHR12290">
    <property type="entry name" value="CORNICHON-RELATED"/>
    <property type="match status" value="1"/>
</dbReference>
<dbReference type="Pfam" id="PF03311">
    <property type="entry name" value="Cornichon"/>
    <property type="match status" value="1"/>
</dbReference>
<dbReference type="SMART" id="SM01398">
    <property type="entry name" value="Cornichon"/>
    <property type="match status" value="1"/>
</dbReference>
<dbReference type="PROSITE" id="PS01340">
    <property type="entry name" value="CORNICHON"/>
    <property type="match status" value="1"/>
</dbReference>
<accession>P38312</accession>
<accession>D6VQK6</accession>
<reference key="1">
    <citation type="journal article" date="1994" name="EMBO J.">
        <title>Complete DNA sequence of yeast chromosome II.</title>
        <authorList>
            <person name="Feldmann H."/>
            <person name="Aigle M."/>
            <person name="Aljinovic G."/>
            <person name="Andre B."/>
            <person name="Baclet M.C."/>
            <person name="Barthe C."/>
            <person name="Baur A."/>
            <person name="Becam A.-M."/>
            <person name="Biteau N."/>
            <person name="Boles E."/>
            <person name="Brandt T."/>
            <person name="Brendel M."/>
            <person name="Brueckner M."/>
            <person name="Bussereau F."/>
            <person name="Christiansen C."/>
            <person name="Contreras R."/>
            <person name="Crouzet M."/>
            <person name="Cziepluch C."/>
            <person name="Demolis N."/>
            <person name="Delaveau T."/>
            <person name="Doignon F."/>
            <person name="Domdey H."/>
            <person name="Duesterhus S."/>
            <person name="Dubois E."/>
            <person name="Dujon B."/>
            <person name="El Bakkoury M."/>
            <person name="Entian K.-D."/>
            <person name="Feuermann M."/>
            <person name="Fiers W."/>
            <person name="Fobo G.M."/>
            <person name="Fritz C."/>
            <person name="Gassenhuber J."/>
            <person name="Glansdorff N."/>
            <person name="Goffeau A."/>
            <person name="Grivell L.A."/>
            <person name="de Haan M."/>
            <person name="Hein C."/>
            <person name="Herbert C.J."/>
            <person name="Hollenberg C.P."/>
            <person name="Holmstroem K."/>
            <person name="Jacq C."/>
            <person name="Jacquet M."/>
            <person name="Jauniaux J.-C."/>
            <person name="Jonniaux J.-L."/>
            <person name="Kallesoee T."/>
            <person name="Kiesau P."/>
            <person name="Kirchrath L."/>
            <person name="Koetter P."/>
            <person name="Korol S."/>
            <person name="Liebl S."/>
            <person name="Logghe M."/>
            <person name="Lohan A.J.E."/>
            <person name="Louis E.J."/>
            <person name="Li Z.Y."/>
            <person name="Maat M.J."/>
            <person name="Mallet L."/>
            <person name="Mannhaupt G."/>
            <person name="Messenguy F."/>
            <person name="Miosga T."/>
            <person name="Molemans F."/>
            <person name="Mueller S."/>
            <person name="Nasr F."/>
            <person name="Obermaier B."/>
            <person name="Perea J."/>
            <person name="Pierard A."/>
            <person name="Piravandi E."/>
            <person name="Pohl F.M."/>
            <person name="Pohl T.M."/>
            <person name="Potier S."/>
            <person name="Proft M."/>
            <person name="Purnelle B."/>
            <person name="Ramezani Rad M."/>
            <person name="Rieger M."/>
            <person name="Rose M."/>
            <person name="Schaaff-Gerstenschlaeger I."/>
            <person name="Scherens B."/>
            <person name="Schwarzlose C."/>
            <person name="Skala J."/>
            <person name="Slonimski P.P."/>
            <person name="Smits P.H.M."/>
            <person name="Souciet J.-L."/>
            <person name="Steensma H.Y."/>
            <person name="Stucka R."/>
            <person name="Urrestarazu L.A."/>
            <person name="van der Aart Q.J.M."/>
            <person name="Van Dyck L."/>
            <person name="Vassarotti A."/>
            <person name="Vetter I."/>
            <person name="Vierendeels F."/>
            <person name="Vissers S."/>
            <person name="Wagner G."/>
            <person name="de Wergifosse P."/>
            <person name="Wolfe K.H."/>
            <person name="Zagulski M."/>
            <person name="Zimmermann F.K."/>
            <person name="Mewes H.-W."/>
            <person name="Kleine K."/>
        </authorList>
    </citation>
    <scope>NUCLEOTIDE SEQUENCE [LARGE SCALE GENOMIC DNA]</scope>
    <source>
        <strain>ATCC 204508 / S288c</strain>
    </source>
</reference>
<reference key="2">
    <citation type="journal article" date="2014" name="G3 (Bethesda)">
        <title>The reference genome sequence of Saccharomyces cerevisiae: Then and now.</title>
        <authorList>
            <person name="Engel S.R."/>
            <person name="Dietrich F.S."/>
            <person name="Fisk D.G."/>
            <person name="Binkley G."/>
            <person name="Balakrishnan R."/>
            <person name="Costanzo M.C."/>
            <person name="Dwight S.S."/>
            <person name="Hitz B.C."/>
            <person name="Karra K."/>
            <person name="Nash R.S."/>
            <person name="Weng S."/>
            <person name="Wong E.D."/>
            <person name="Lloyd P."/>
            <person name="Skrzypek M.S."/>
            <person name="Miyasato S.R."/>
            <person name="Simison M."/>
            <person name="Cherry J.M."/>
        </authorList>
    </citation>
    <scope>GENOME REANNOTATION</scope>
    <source>
        <strain>ATCC 204508 / S288c</strain>
    </source>
</reference>
<reference key="3">
    <citation type="journal article" date="2006" name="Proc. Natl. Acad. Sci. U.S.A.">
        <title>A global topology map of the Saccharomyces cerevisiae membrane proteome.</title>
        <authorList>
            <person name="Kim H."/>
            <person name="Melen K."/>
            <person name="Oesterberg M."/>
            <person name="von Heijne G."/>
        </authorList>
    </citation>
    <scope>TOPOLOGY [LARGE SCALE ANALYSIS]</scope>
    <source>
        <strain>ATCC 208353 / W303-1A</strain>
    </source>
</reference>
<gene>
    <name type="primary">ERV15</name>
    <name type="ordered locus">YBR210W</name>
    <name type="ORF">YBR1457</name>
</gene>
<organism>
    <name type="scientific">Saccharomyces cerevisiae (strain ATCC 204508 / S288c)</name>
    <name type="common">Baker's yeast</name>
    <dbReference type="NCBI Taxonomy" id="559292"/>
    <lineage>
        <taxon>Eukaryota</taxon>
        <taxon>Fungi</taxon>
        <taxon>Dikarya</taxon>
        <taxon>Ascomycota</taxon>
        <taxon>Saccharomycotina</taxon>
        <taxon>Saccharomycetes</taxon>
        <taxon>Saccharomycetales</taxon>
        <taxon>Saccharomycetaceae</taxon>
        <taxon>Saccharomyces</taxon>
    </lineage>
</organism>
<name>ERV15_YEAST</name>
<keyword id="KW-0472">Membrane</keyword>
<keyword id="KW-1185">Reference proteome</keyword>
<keyword id="KW-0812">Transmembrane</keyword>
<keyword id="KW-1133">Transmembrane helix</keyword>
<comment type="subcellular location">
    <subcellularLocation>
        <location>Membrane</location>
        <topology>Multi-pass membrane protein</topology>
    </subcellularLocation>
</comment>
<comment type="similarity">
    <text evidence="2">Belongs to the cornichon family.</text>
</comment>
<evidence type="ECO:0000255" key="1"/>
<evidence type="ECO:0000305" key="2"/>
<proteinExistence type="evidence at protein level"/>
<sequence>MSGTGLSLFVTGLILNCLNSICQIYFTILYGDLEADYINSIELCKRVNRLSVPEAILQAFISALFLFNGYWFVFLLNVPVLAYNASKVYKKTHLLDATDIFRKLGRCKIECFLKLGFYLLIFFFYFYRMVTALLENDANLIS</sequence>